<proteinExistence type="inferred from homology"/>
<comment type="function">
    <text evidence="1">Component of the Mediator complex, a coactivator involved in the regulated transcription of nearly all RNA polymerase II-dependent genes. Mediator functions as a bridge to convey information from gene-specific regulatory proteins to the basal RNA polymerase II transcription machinery. Mediator is recruited to promoters by direct interactions with regulatory proteins and serves as a scaffold for the assembly of a functional preinitiation complex with RNA polymerase II and the general transcription factors (By similarity).</text>
</comment>
<comment type="subunit">
    <text evidence="1">Component of the Mediator complex.</text>
</comment>
<comment type="subcellular location">
    <subcellularLocation>
        <location evidence="1">Nucleus</location>
    </subcellularLocation>
</comment>
<comment type="similarity">
    <text evidence="4">Belongs to the Mediator complex subunit 21 family.</text>
</comment>
<feature type="chain" id="PRO_0000305967" description="Mediator of RNA polymerase II transcription subunit 21">
    <location>
        <begin position="1"/>
        <end position="137"/>
    </location>
</feature>
<feature type="region of interest" description="Disordered" evidence="3">
    <location>
        <begin position="37"/>
        <end position="56"/>
    </location>
</feature>
<feature type="coiled-coil region" evidence="2">
    <location>
        <begin position="87"/>
        <end position="130"/>
    </location>
</feature>
<dbReference type="EMBL" id="CM002239">
    <property type="protein sequence ID" value="EAA32592.1"/>
    <property type="molecule type" value="Genomic_DNA"/>
</dbReference>
<dbReference type="RefSeq" id="XP_961828.1">
    <property type="nucleotide sequence ID" value="XM_956735.2"/>
</dbReference>
<dbReference type="SMR" id="Q7S8C2"/>
<dbReference type="FunCoup" id="Q7S8C2">
    <property type="interactions" value="247"/>
</dbReference>
<dbReference type="STRING" id="367110.Q7S8C2"/>
<dbReference type="PaxDb" id="5141-EFNCRP00000004973"/>
<dbReference type="EnsemblFungi" id="EAA32592">
    <property type="protein sequence ID" value="EAA32592"/>
    <property type="gene ID" value="NCU05263"/>
</dbReference>
<dbReference type="GeneID" id="3877976"/>
<dbReference type="KEGG" id="ncr:NCU05263"/>
<dbReference type="VEuPathDB" id="FungiDB:NCU05263"/>
<dbReference type="HOGENOM" id="CLU_094271_1_1_1"/>
<dbReference type="InParanoid" id="Q7S8C2"/>
<dbReference type="OMA" id="LTTYHDH"/>
<dbReference type="OrthoDB" id="526653at2759"/>
<dbReference type="Proteomes" id="UP000001805">
    <property type="component" value="Chromosome 4, Linkage Group IV"/>
</dbReference>
<dbReference type="GO" id="GO:0016592">
    <property type="term" value="C:mediator complex"/>
    <property type="evidence" value="ECO:0000318"/>
    <property type="project" value="GO_Central"/>
</dbReference>
<dbReference type="GO" id="GO:0003712">
    <property type="term" value="F:transcription coregulator activity"/>
    <property type="evidence" value="ECO:0000318"/>
    <property type="project" value="GO_Central"/>
</dbReference>
<dbReference type="GO" id="GO:0006357">
    <property type="term" value="P:regulation of transcription by RNA polymerase II"/>
    <property type="evidence" value="ECO:0000318"/>
    <property type="project" value="GO_Central"/>
</dbReference>
<dbReference type="Gene3D" id="6.10.280.10">
    <property type="entry name" value="Mediator complex, subunit Med21"/>
    <property type="match status" value="1"/>
</dbReference>
<dbReference type="InterPro" id="IPR037212">
    <property type="entry name" value="Med7/Med21-like"/>
</dbReference>
<dbReference type="InterPro" id="IPR021384">
    <property type="entry name" value="Mediator_Med21"/>
</dbReference>
<dbReference type="PANTHER" id="PTHR13381:SF0">
    <property type="entry name" value="MEDIATOR OF RNA POLYMERASE II TRANSCRIPTION SUBUNIT 21"/>
    <property type="match status" value="1"/>
</dbReference>
<dbReference type="PANTHER" id="PTHR13381">
    <property type="entry name" value="RNA POLYMERASE II HOLOENZYME COMPONENT SRB7"/>
    <property type="match status" value="1"/>
</dbReference>
<dbReference type="Pfam" id="PF11221">
    <property type="entry name" value="Med21"/>
    <property type="match status" value="1"/>
</dbReference>
<dbReference type="SUPFAM" id="SSF140718">
    <property type="entry name" value="Mediator hinge subcomplex-like"/>
    <property type="match status" value="1"/>
</dbReference>
<gene>
    <name type="primary">srb-7</name>
    <name type="synonym">med-21</name>
    <name type="ORF">NCU05263</name>
</gene>
<accession>Q7S8C2</accession>
<protein>
    <recommendedName>
        <fullName>Mediator of RNA polymerase II transcription subunit 21</fullName>
    </recommendedName>
    <alternativeName>
        <fullName>Mediator complex subunit 21</fullName>
    </alternativeName>
</protein>
<keyword id="KW-0010">Activator</keyword>
<keyword id="KW-0175">Coiled coil</keyword>
<keyword id="KW-0539">Nucleus</keyword>
<keyword id="KW-1185">Reference proteome</keyword>
<keyword id="KW-0804">Transcription</keyword>
<keyword id="KW-0805">Transcription regulation</keyword>
<organism>
    <name type="scientific">Neurospora crassa (strain ATCC 24698 / 74-OR23-1A / CBS 708.71 / DSM 1257 / FGSC 987)</name>
    <dbReference type="NCBI Taxonomy" id="367110"/>
    <lineage>
        <taxon>Eukaryota</taxon>
        <taxon>Fungi</taxon>
        <taxon>Dikarya</taxon>
        <taxon>Ascomycota</taxon>
        <taxon>Pezizomycotina</taxon>
        <taxon>Sordariomycetes</taxon>
        <taxon>Sordariomycetidae</taxon>
        <taxon>Sordariales</taxon>
        <taxon>Sordariaceae</taxon>
        <taxon>Neurospora</taxon>
    </lineage>
</organism>
<evidence type="ECO:0000250" key="1"/>
<evidence type="ECO:0000255" key="2"/>
<evidence type="ECO:0000256" key="3">
    <source>
        <dbReference type="SAM" id="MobiDB-lite"/>
    </source>
</evidence>
<evidence type="ECO:0000305" key="4"/>
<name>MED21_NEUCR</name>
<sequence>MSDRLSQLQEAVDQLMEQFIATYFYIDRHHDLKTFSPKDTIAPSKADQPPEVDTLPPDVFQAGQLELARDLITREQQIEYLISSLPGLDNSEQDQLQSIKELEEELNVAEKQRQEAVKEKDEVLVKLDQTLRSIRRY</sequence>
<reference key="1">
    <citation type="journal article" date="2003" name="Nature">
        <title>The genome sequence of the filamentous fungus Neurospora crassa.</title>
        <authorList>
            <person name="Galagan J.E."/>
            <person name="Calvo S.E."/>
            <person name="Borkovich K.A."/>
            <person name="Selker E.U."/>
            <person name="Read N.D."/>
            <person name="Jaffe D.B."/>
            <person name="FitzHugh W."/>
            <person name="Ma L.-J."/>
            <person name="Smirnov S."/>
            <person name="Purcell S."/>
            <person name="Rehman B."/>
            <person name="Elkins T."/>
            <person name="Engels R."/>
            <person name="Wang S."/>
            <person name="Nielsen C.B."/>
            <person name="Butler J."/>
            <person name="Endrizzi M."/>
            <person name="Qui D."/>
            <person name="Ianakiev P."/>
            <person name="Bell-Pedersen D."/>
            <person name="Nelson M.A."/>
            <person name="Werner-Washburne M."/>
            <person name="Selitrennikoff C.P."/>
            <person name="Kinsey J.A."/>
            <person name="Braun E.L."/>
            <person name="Zelter A."/>
            <person name="Schulte U."/>
            <person name="Kothe G.O."/>
            <person name="Jedd G."/>
            <person name="Mewes H.-W."/>
            <person name="Staben C."/>
            <person name="Marcotte E."/>
            <person name="Greenberg D."/>
            <person name="Roy A."/>
            <person name="Foley K."/>
            <person name="Naylor J."/>
            <person name="Stange-Thomann N."/>
            <person name="Barrett R."/>
            <person name="Gnerre S."/>
            <person name="Kamal M."/>
            <person name="Kamvysselis M."/>
            <person name="Mauceli E.W."/>
            <person name="Bielke C."/>
            <person name="Rudd S."/>
            <person name="Frishman D."/>
            <person name="Krystofova S."/>
            <person name="Rasmussen C."/>
            <person name="Metzenberg R.L."/>
            <person name="Perkins D.D."/>
            <person name="Kroken S."/>
            <person name="Cogoni C."/>
            <person name="Macino G."/>
            <person name="Catcheside D.E.A."/>
            <person name="Li W."/>
            <person name="Pratt R.J."/>
            <person name="Osmani S.A."/>
            <person name="DeSouza C.P.C."/>
            <person name="Glass N.L."/>
            <person name="Orbach M.J."/>
            <person name="Berglund J.A."/>
            <person name="Voelker R."/>
            <person name="Yarden O."/>
            <person name="Plamann M."/>
            <person name="Seiler S."/>
            <person name="Dunlap J.C."/>
            <person name="Radford A."/>
            <person name="Aramayo R."/>
            <person name="Natvig D.O."/>
            <person name="Alex L.A."/>
            <person name="Mannhaupt G."/>
            <person name="Ebbole D.J."/>
            <person name="Freitag M."/>
            <person name="Paulsen I."/>
            <person name="Sachs M.S."/>
            <person name="Lander E.S."/>
            <person name="Nusbaum C."/>
            <person name="Birren B.W."/>
        </authorList>
    </citation>
    <scope>NUCLEOTIDE SEQUENCE [LARGE SCALE GENOMIC DNA]</scope>
    <source>
        <strain>ATCC 24698 / 74-OR23-1A / CBS 708.71 / DSM 1257 / FGSC 987</strain>
    </source>
</reference>